<gene>
    <name evidence="2" type="primary">eurl</name>
    <name type="ORF">zgc:110006</name>
</gene>
<proteinExistence type="evidence at transcript level"/>
<keyword id="KW-0175">Coiled coil</keyword>
<keyword id="KW-0221">Differentiation</keyword>
<keyword id="KW-0524">Neurogenesis</keyword>
<keyword id="KW-1185">Reference proteome</keyword>
<organism>
    <name type="scientific">Danio rerio</name>
    <name type="common">Zebrafish</name>
    <name type="synonym">Brachydanio rerio</name>
    <dbReference type="NCBI Taxonomy" id="7955"/>
    <lineage>
        <taxon>Eukaryota</taxon>
        <taxon>Metazoa</taxon>
        <taxon>Chordata</taxon>
        <taxon>Craniata</taxon>
        <taxon>Vertebrata</taxon>
        <taxon>Euteleostomi</taxon>
        <taxon>Actinopterygii</taxon>
        <taxon>Neopterygii</taxon>
        <taxon>Teleostei</taxon>
        <taxon>Ostariophysi</taxon>
        <taxon>Cypriniformes</taxon>
        <taxon>Danionidae</taxon>
        <taxon>Danioninae</taxon>
        <taxon>Danio</taxon>
    </lineage>
</organism>
<comment type="function">
    <text evidence="1">Plays a role in cortical progenitor cell proliferation and differentiation. May promote dendritic spine development of post-migratory cortical projection neurons by modulating the beta-catenin signaling pathway.</text>
</comment>
<comment type="similarity">
    <text evidence="5">Belongs to the EURL family.</text>
</comment>
<protein>
    <recommendedName>
        <fullName evidence="5">Protein EURL homolog</fullName>
    </recommendedName>
</protein>
<evidence type="ECO:0000250" key="1">
    <source>
        <dbReference type="UniProtKB" id="Q9D7G4"/>
    </source>
</evidence>
<evidence type="ECO:0000250" key="2">
    <source>
        <dbReference type="UniProtKB" id="Q9I8W6"/>
    </source>
</evidence>
<evidence type="ECO:0000255" key="3"/>
<evidence type="ECO:0000256" key="4">
    <source>
        <dbReference type="SAM" id="MobiDB-lite"/>
    </source>
</evidence>
<evidence type="ECO:0000305" key="5"/>
<dbReference type="EMBL" id="BC095124">
    <property type="protein sequence ID" value="AAH95124.1"/>
    <property type="molecule type" value="mRNA"/>
</dbReference>
<dbReference type="RefSeq" id="NP_001018388.1">
    <property type="nucleotide sequence ID" value="NM_001020552.1"/>
</dbReference>
<dbReference type="SMR" id="Q503Y8"/>
<dbReference type="FunCoup" id="Q503Y8">
    <property type="interactions" value="986"/>
</dbReference>
<dbReference type="STRING" id="7955.ENSDARP00000049632"/>
<dbReference type="PaxDb" id="7955-ENSDARP00000109773"/>
<dbReference type="Ensembl" id="ENSDART00000049633">
    <property type="protein sequence ID" value="ENSDARP00000049632"/>
    <property type="gene ID" value="ENSDARG00000030803"/>
</dbReference>
<dbReference type="Ensembl" id="ENSDART00000192734">
    <property type="protein sequence ID" value="ENSDARP00000157111"/>
    <property type="gene ID" value="ENSDARG00000030803"/>
</dbReference>
<dbReference type="GeneID" id="553573"/>
<dbReference type="KEGG" id="dre:553573"/>
<dbReference type="AGR" id="ZFIN:ZDB-GENE-050522-119"/>
<dbReference type="ZFIN" id="ZDB-GENE-050522-119">
    <property type="gene designation" value="zgc:110006"/>
</dbReference>
<dbReference type="eggNOG" id="ENOG502QS2B">
    <property type="taxonomic scope" value="Eukaryota"/>
</dbReference>
<dbReference type="HOGENOM" id="CLU_059941_0_0_1"/>
<dbReference type="InParanoid" id="Q503Y8"/>
<dbReference type="OMA" id="NCTKLPW"/>
<dbReference type="OrthoDB" id="10046286at2759"/>
<dbReference type="PhylomeDB" id="Q503Y8"/>
<dbReference type="TreeFam" id="TF331712"/>
<dbReference type="PRO" id="PR:Q503Y8"/>
<dbReference type="Proteomes" id="UP000000437">
    <property type="component" value="Chromosome 10"/>
</dbReference>
<dbReference type="Bgee" id="ENSDARG00000030803">
    <property type="expression patterns" value="Expressed in mature ovarian follicle and 20 other cell types or tissues"/>
</dbReference>
<dbReference type="ExpressionAtlas" id="Q503Y8">
    <property type="expression patterns" value="baseline and differential"/>
</dbReference>
<dbReference type="GO" id="GO:0021895">
    <property type="term" value="P:cerebral cortex neuron differentiation"/>
    <property type="evidence" value="ECO:0000250"/>
    <property type="project" value="UniProtKB"/>
</dbReference>
<dbReference type="GO" id="GO:0060999">
    <property type="term" value="P:positive regulation of dendritic spine development"/>
    <property type="evidence" value="ECO:0000250"/>
    <property type="project" value="UniProtKB"/>
</dbReference>
<dbReference type="InterPro" id="IPR009704">
    <property type="entry name" value="EURL_prot"/>
</dbReference>
<dbReference type="PANTHER" id="PTHR15961">
    <property type="entry name" value="PROTEIN EURL HOMOLOG"/>
    <property type="match status" value="1"/>
</dbReference>
<dbReference type="PANTHER" id="PTHR15961:SF3">
    <property type="entry name" value="PROTEIN EURL HOMOLOG"/>
    <property type="match status" value="1"/>
</dbReference>
<dbReference type="Pfam" id="PF06937">
    <property type="entry name" value="EURL"/>
    <property type="match status" value="1"/>
</dbReference>
<reference key="1">
    <citation type="submission" date="2005-05" db="EMBL/GenBank/DDBJ databases">
        <authorList>
            <consortium name="NIH - Zebrafish Gene Collection (ZGC) project"/>
        </authorList>
    </citation>
    <scope>NUCLEOTIDE SEQUENCE [LARGE SCALE MRNA]</scope>
    <source>
        <tissue>Eye</tissue>
    </source>
</reference>
<sequence length="277" mass="31708">MEEEEHFVNIDLNDDNICSICKLETDTGTLSFCHVCFELSIEGISSATLLHSKSLRGHRDCFEKYHLIANQKLSRAKASHSTYEGVKRALSQRINRIIQYAQNRDSVTPENPGRWGAKQILCHTQQAGRKLVPQSDAQVPRYAPRWTEEASMVSESDYGKSMLDCHSAEELGLGLWPGERPQNREQRDSRQRRHSGHSREELMRKNVEELRQLNEQLLLQIQNVFEELSVVVQEKDSLSSELHVRHIAIEQLFKNCAKLPWLQIGRAGVKAANNPVE</sequence>
<accession>Q503Y8</accession>
<feature type="chain" id="PRO_0000360429" description="Protein EURL homolog">
    <location>
        <begin position="1"/>
        <end position="277"/>
    </location>
</feature>
<feature type="region of interest" description="Disordered" evidence="4">
    <location>
        <begin position="173"/>
        <end position="201"/>
    </location>
</feature>
<feature type="coiled-coil region" evidence="3">
    <location>
        <begin position="197"/>
        <end position="229"/>
    </location>
</feature>
<name>EURL_DANRE</name>